<dbReference type="EC" id="4.1.99.22" evidence="1"/>
<dbReference type="EMBL" id="CP000867">
    <property type="protein sequence ID" value="ABX01143.1"/>
    <property type="molecule type" value="Genomic_DNA"/>
</dbReference>
<dbReference type="SMR" id="A9A661"/>
<dbReference type="STRING" id="444158.MmarC6_0322"/>
<dbReference type="KEGG" id="mmx:MmarC6_0322"/>
<dbReference type="eggNOG" id="arCOG00930">
    <property type="taxonomic scope" value="Archaea"/>
</dbReference>
<dbReference type="HOGENOM" id="CLU_009273_0_1_2"/>
<dbReference type="OrthoDB" id="6925at2157"/>
<dbReference type="PhylomeDB" id="A9A661"/>
<dbReference type="UniPathway" id="UPA00344"/>
<dbReference type="GO" id="GO:0051539">
    <property type="term" value="F:4 iron, 4 sulfur cluster binding"/>
    <property type="evidence" value="ECO:0007669"/>
    <property type="project" value="UniProtKB-UniRule"/>
</dbReference>
<dbReference type="GO" id="GO:0061799">
    <property type="term" value="F:cyclic pyranopterin monophosphate synthase activity"/>
    <property type="evidence" value="ECO:0007669"/>
    <property type="project" value="TreeGrafter"/>
</dbReference>
<dbReference type="GO" id="GO:0061798">
    <property type="term" value="F:GTP 3',8'-cyclase activity"/>
    <property type="evidence" value="ECO:0007669"/>
    <property type="project" value="UniProtKB-UniRule"/>
</dbReference>
<dbReference type="GO" id="GO:0005525">
    <property type="term" value="F:GTP binding"/>
    <property type="evidence" value="ECO:0007669"/>
    <property type="project" value="UniProtKB-UniRule"/>
</dbReference>
<dbReference type="GO" id="GO:0046872">
    <property type="term" value="F:metal ion binding"/>
    <property type="evidence" value="ECO:0007669"/>
    <property type="project" value="UniProtKB-KW"/>
</dbReference>
<dbReference type="GO" id="GO:1904047">
    <property type="term" value="F:S-adenosyl-L-methionine binding"/>
    <property type="evidence" value="ECO:0007669"/>
    <property type="project" value="UniProtKB-UniRule"/>
</dbReference>
<dbReference type="GO" id="GO:0006777">
    <property type="term" value="P:Mo-molybdopterin cofactor biosynthetic process"/>
    <property type="evidence" value="ECO:0007669"/>
    <property type="project" value="UniProtKB-UniRule"/>
</dbReference>
<dbReference type="CDD" id="cd01335">
    <property type="entry name" value="Radical_SAM"/>
    <property type="match status" value="1"/>
</dbReference>
<dbReference type="Gene3D" id="3.20.20.70">
    <property type="entry name" value="Aldolase class I"/>
    <property type="match status" value="1"/>
</dbReference>
<dbReference type="HAMAP" id="MF_01225_A">
    <property type="entry name" value="MoaA_A"/>
    <property type="match status" value="1"/>
</dbReference>
<dbReference type="InterPro" id="IPR013785">
    <property type="entry name" value="Aldolase_TIM"/>
</dbReference>
<dbReference type="InterPro" id="IPR006638">
    <property type="entry name" value="Elp3/MiaA/NifB-like_rSAM"/>
</dbReference>
<dbReference type="InterPro" id="IPR013485">
    <property type="entry name" value="MoaA_arc"/>
</dbReference>
<dbReference type="InterPro" id="IPR010505">
    <property type="entry name" value="MoaA_twitch"/>
</dbReference>
<dbReference type="InterPro" id="IPR050105">
    <property type="entry name" value="MoCo_biosynth_MoaA/MoaC"/>
</dbReference>
<dbReference type="InterPro" id="IPR007197">
    <property type="entry name" value="rSAM"/>
</dbReference>
<dbReference type="NCBIfam" id="TIGR02668">
    <property type="entry name" value="moaA_archaeal"/>
    <property type="match status" value="1"/>
</dbReference>
<dbReference type="NCBIfam" id="NF001199">
    <property type="entry name" value="PRK00164.2-1"/>
    <property type="match status" value="1"/>
</dbReference>
<dbReference type="PANTHER" id="PTHR22960:SF0">
    <property type="entry name" value="MOLYBDENUM COFACTOR BIOSYNTHESIS PROTEIN 1"/>
    <property type="match status" value="1"/>
</dbReference>
<dbReference type="PANTHER" id="PTHR22960">
    <property type="entry name" value="MOLYBDOPTERIN COFACTOR SYNTHESIS PROTEIN A"/>
    <property type="match status" value="1"/>
</dbReference>
<dbReference type="Pfam" id="PF13353">
    <property type="entry name" value="Fer4_12"/>
    <property type="match status" value="1"/>
</dbReference>
<dbReference type="Pfam" id="PF06463">
    <property type="entry name" value="Mob_synth_C"/>
    <property type="match status" value="1"/>
</dbReference>
<dbReference type="Pfam" id="PF04055">
    <property type="entry name" value="Radical_SAM"/>
    <property type="match status" value="1"/>
</dbReference>
<dbReference type="SFLD" id="SFLDG01383">
    <property type="entry name" value="cyclic_pyranopterin_phosphate"/>
    <property type="match status" value="1"/>
</dbReference>
<dbReference type="SFLD" id="SFLDG01067">
    <property type="entry name" value="SPASM/twitch_domain_containing"/>
    <property type="match status" value="1"/>
</dbReference>
<dbReference type="SMART" id="SM00729">
    <property type="entry name" value="Elp3"/>
    <property type="match status" value="1"/>
</dbReference>
<dbReference type="SUPFAM" id="SSF102114">
    <property type="entry name" value="Radical SAM enzymes"/>
    <property type="match status" value="1"/>
</dbReference>
<dbReference type="PROSITE" id="PS51918">
    <property type="entry name" value="RADICAL_SAM"/>
    <property type="match status" value="1"/>
</dbReference>
<reference key="1">
    <citation type="submission" date="2007-10" db="EMBL/GenBank/DDBJ databases">
        <title>Complete sequence of Methanococcus maripaludis C6.</title>
        <authorList>
            <consortium name="US DOE Joint Genome Institute"/>
            <person name="Copeland A."/>
            <person name="Lucas S."/>
            <person name="Lapidus A."/>
            <person name="Barry K."/>
            <person name="Glavina del Rio T."/>
            <person name="Dalin E."/>
            <person name="Tice H."/>
            <person name="Pitluck S."/>
            <person name="Clum A."/>
            <person name="Schmutz J."/>
            <person name="Larimer F."/>
            <person name="Land M."/>
            <person name="Hauser L."/>
            <person name="Kyrpides N."/>
            <person name="Mikhailova N."/>
            <person name="Sieprawska-Lupa M."/>
            <person name="Whitman W.B."/>
            <person name="Richardson P."/>
        </authorList>
    </citation>
    <scope>NUCLEOTIDE SEQUENCE [LARGE SCALE GENOMIC DNA]</scope>
    <source>
        <strain>C6 / ATCC BAA-1332</strain>
    </source>
</reference>
<evidence type="ECO:0000255" key="1">
    <source>
        <dbReference type="HAMAP-Rule" id="MF_01225"/>
    </source>
</evidence>
<evidence type="ECO:0000255" key="2">
    <source>
        <dbReference type="PROSITE-ProRule" id="PRU01266"/>
    </source>
</evidence>
<proteinExistence type="inferred from homology"/>
<organism>
    <name type="scientific">Methanococcus maripaludis (strain C6 / ATCC BAA-1332)</name>
    <dbReference type="NCBI Taxonomy" id="444158"/>
    <lineage>
        <taxon>Archaea</taxon>
        <taxon>Methanobacteriati</taxon>
        <taxon>Methanobacteriota</taxon>
        <taxon>Methanomada group</taxon>
        <taxon>Methanococci</taxon>
        <taxon>Methanococcales</taxon>
        <taxon>Methanococcaceae</taxon>
        <taxon>Methanococcus</taxon>
    </lineage>
</organism>
<name>MOAA_METM6</name>
<sequence length="298" mass="34275">MEDRYGREIRSFRLSITPKCNLKCFYCHKEGRNEEHGKLMSADEIVKIVKSSLEFGVRKIKISGGEPLLRTDLPKIIENIKDDQIKDISLTTNGILLEKYAQKLKDAGLDRVNVSLDTLDPVQYKKITAGGNIESVKKGIEKAIEVGLTPLKVNFLAMDCTVKQLPAIMDYCRKIGAILQIIEFIPMEPELKHHHIDVIPIEKEIAKKADQVFTRKFMQNRKKYVIDGLEVEFVRPMDNTEFCGHCTRIRLTYDGYLKPCLLRDDNLVDVANPVRNGEDIRKYFIKCIEEREPFCKAQ</sequence>
<keyword id="KW-0004">4Fe-4S</keyword>
<keyword id="KW-0342">GTP-binding</keyword>
<keyword id="KW-0408">Iron</keyword>
<keyword id="KW-0411">Iron-sulfur</keyword>
<keyword id="KW-0456">Lyase</keyword>
<keyword id="KW-0479">Metal-binding</keyword>
<keyword id="KW-0501">Molybdenum cofactor biosynthesis</keyword>
<keyword id="KW-0547">Nucleotide-binding</keyword>
<keyword id="KW-0949">S-adenosyl-L-methionine</keyword>
<protein>
    <recommendedName>
        <fullName evidence="1">Probable GTP 3',8-cyclase</fullName>
        <ecNumber evidence="1">4.1.99.22</ecNumber>
    </recommendedName>
    <alternativeName>
        <fullName evidence="1">Molybdenum cofactor biosynthesis protein A</fullName>
    </alternativeName>
</protein>
<comment type="function">
    <text evidence="1">Catalyzes the cyclization of GTP to (8S)-3',8-cyclo-7,8-dihydroguanosine 5'-triphosphate.</text>
</comment>
<comment type="catalytic activity">
    <reaction evidence="1">
        <text>GTP + AH2 + S-adenosyl-L-methionine = (8S)-3',8-cyclo-7,8-dihydroguanosine 5'-triphosphate + 5'-deoxyadenosine + L-methionine + A + H(+)</text>
        <dbReference type="Rhea" id="RHEA:49576"/>
        <dbReference type="ChEBI" id="CHEBI:13193"/>
        <dbReference type="ChEBI" id="CHEBI:15378"/>
        <dbReference type="ChEBI" id="CHEBI:17319"/>
        <dbReference type="ChEBI" id="CHEBI:17499"/>
        <dbReference type="ChEBI" id="CHEBI:37565"/>
        <dbReference type="ChEBI" id="CHEBI:57844"/>
        <dbReference type="ChEBI" id="CHEBI:59789"/>
        <dbReference type="ChEBI" id="CHEBI:131766"/>
        <dbReference type="EC" id="4.1.99.22"/>
    </reaction>
</comment>
<comment type="cofactor">
    <cofactor evidence="1">
        <name>[4Fe-4S] cluster</name>
        <dbReference type="ChEBI" id="CHEBI:49883"/>
    </cofactor>
    <text evidence="1">Binds 2 [4Fe-4S] clusters. Binds 1 [4Fe-4S] cluster coordinated with 3 cysteines and an exchangeable S-adenosyl-L-methionine and 1 [4Fe-4S] cluster coordinated with 3 cysteines and the GTP-derived substrate.</text>
</comment>
<comment type="pathway">
    <text evidence="1">Cofactor biosynthesis; molybdopterin biosynthesis.</text>
</comment>
<comment type="similarity">
    <text evidence="1">Belongs to the radical SAM superfamily. MoaA family.</text>
</comment>
<accession>A9A661</accession>
<gene>
    <name evidence="1" type="primary">moaA</name>
    <name type="ordered locus">MmarC6_0322</name>
</gene>
<feature type="chain" id="PRO_1000139332" description="Probable GTP 3',8-cyclase">
    <location>
        <begin position="1"/>
        <end position="298"/>
    </location>
</feature>
<feature type="domain" description="Radical SAM core" evidence="2">
    <location>
        <begin position="4"/>
        <end position="227"/>
    </location>
</feature>
<feature type="binding site" evidence="1">
    <location>
        <position position="13"/>
    </location>
    <ligand>
        <name>GTP</name>
        <dbReference type="ChEBI" id="CHEBI:37565"/>
    </ligand>
</feature>
<feature type="binding site" evidence="1">
    <location>
        <position position="20"/>
    </location>
    <ligand>
        <name>[4Fe-4S] cluster</name>
        <dbReference type="ChEBI" id="CHEBI:49883"/>
        <label>1</label>
        <note>4Fe-4S-S-AdoMet</note>
    </ligand>
</feature>
<feature type="binding site" evidence="1">
    <location>
        <position position="24"/>
    </location>
    <ligand>
        <name>[4Fe-4S] cluster</name>
        <dbReference type="ChEBI" id="CHEBI:49883"/>
        <label>1</label>
        <note>4Fe-4S-S-AdoMet</note>
    </ligand>
</feature>
<feature type="binding site" evidence="1">
    <location>
        <position position="26"/>
    </location>
    <ligand>
        <name>S-adenosyl-L-methionine</name>
        <dbReference type="ChEBI" id="CHEBI:59789"/>
    </ligand>
</feature>
<feature type="binding site" evidence="1">
    <location>
        <position position="27"/>
    </location>
    <ligand>
        <name>[4Fe-4S] cluster</name>
        <dbReference type="ChEBI" id="CHEBI:49883"/>
        <label>1</label>
        <note>4Fe-4S-S-AdoMet</note>
    </ligand>
</feature>
<feature type="binding site" evidence="1">
    <location>
        <position position="61"/>
    </location>
    <ligand>
        <name>GTP</name>
        <dbReference type="ChEBI" id="CHEBI:37565"/>
    </ligand>
</feature>
<feature type="binding site" evidence="1">
    <location>
        <position position="65"/>
    </location>
    <ligand>
        <name>S-adenosyl-L-methionine</name>
        <dbReference type="ChEBI" id="CHEBI:59789"/>
    </ligand>
</feature>
<feature type="binding site" evidence="1">
    <location>
        <position position="91"/>
    </location>
    <ligand>
        <name>GTP</name>
        <dbReference type="ChEBI" id="CHEBI:37565"/>
    </ligand>
</feature>
<feature type="binding site" evidence="1">
    <location>
        <position position="115"/>
    </location>
    <ligand>
        <name>S-adenosyl-L-methionine</name>
        <dbReference type="ChEBI" id="CHEBI:59789"/>
    </ligand>
</feature>
<feature type="binding site" evidence="1">
    <location>
        <position position="152"/>
    </location>
    <ligand>
        <name>GTP</name>
        <dbReference type="ChEBI" id="CHEBI:37565"/>
    </ligand>
</feature>
<feature type="binding site" evidence="1">
    <location>
        <position position="243"/>
    </location>
    <ligand>
        <name>[4Fe-4S] cluster</name>
        <dbReference type="ChEBI" id="CHEBI:49883"/>
        <label>2</label>
        <note>4Fe-4S-substrate</note>
    </ligand>
</feature>
<feature type="binding site" evidence="1">
    <location>
        <position position="246"/>
    </location>
    <ligand>
        <name>[4Fe-4S] cluster</name>
        <dbReference type="ChEBI" id="CHEBI:49883"/>
        <label>2</label>
        <note>4Fe-4S-substrate</note>
    </ligand>
</feature>
<feature type="binding site" evidence="1">
    <location>
        <begin position="248"/>
        <end position="250"/>
    </location>
    <ligand>
        <name>GTP</name>
        <dbReference type="ChEBI" id="CHEBI:37565"/>
    </ligand>
</feature>
<feature type="binding site" evidence="1">
    <location>
        <position position="260"/>
    </location>
    <ligand>
        <name>[4Fe-4S] cluster</name>
        <dbReference type="ChEBI" id="CHEBI:49883"/>
        <label>2</label>
        <note>4Fe-4S-substrate</note>
    </ligand>
</feature>